<name>SPEH_THEP3</name>
<feature type="chain" id="PRO_1000125469" description="S-adenosylmethionine decarboxylase beta chain" evidence="1">
    <location>
        <begin position="1"/>
        <end position="62"/>
    </location>
</feature>
<feature type="chain" id="PRO_1000125470" description="S-adenosylmethionine decarboxylase alpha chain" evidence="1">
    <location>
        <begin position="63"/>
        <end position="124"/>
    </location>
</feature>
<feature type="active site" description="Schiff-base intermediate with substrate; via pyruvic acid" evidence="1">
    <location>
        <position position="63"/>
    </location>
</feature>
<feature type="active site" description="Proton acceptor; for processing activity" evidence="1">
    <location>
        <position position="68"/>
    </location>
</feature>
<feature type="active site" description="Proton donor; for catalytic activity" evidence="1">
    <location>
        <position position="83"/>
    </location>
</feature>
<feature type="site" description="Cleavage (non-hydrolytic); by autolysis" evidence="1">
    <location>
        <begin position="62"/>
        <end position="63"/>
    </location>
</feature>
<feature type="modified residue" description="Pyruvic acid (Ser); by autocatalysis" evidence="1">
    <location>
        <position position="63"/>
    </location>
</feature>
<reference key="1">
    <citation type="submission" date="2008-01" db="EMBL/GenBank/DDBJ databases">
        <title>Complete sequence of Thermoanaerobacter pseudethanolicus 39E.</title>
        <authorList>
            <person name="Copeland A."/>
            <person name="Lucas S."/>
            <person name="Lapidus A."/>
            <person name="Barry K."/>
            <person name="Glavina del Rio T."/>
            <person name="Dalin E."/>
            <person name="Tice H."/>
            <person name="Pitluck S."/>
            <person name="Bruce D."/>
            <person name="Goodwin L."/>
            <person name="Saunders E."/>
            <person name="Brettin T."/>
            <person name="Detter J.C."/>
            <person name="Han C."/>
            <person name="Schmutz J."/>
            <person name="Larimer F."/>
            <person name="Land M."/>
            <person name="Hauser L."/>
            <person name="Kyrpides N."/>
            <person name="Lykidis A."/>
            <person name="Hemme C."/>
            <person name="Fields M.W."/>
            <person name="He Z."/>
            <person name="Zhou J."/>
            <person name="Richardson P."/>
        </authorList>
    </citation>
    <scope>NUCLEOTIDE SEQUENCE [LARGE SCALE GENOMIC DNA]</scope>
    <source>
        <strain>ATCC 33223 / DSM 2355 / 39E</strain>
    </source>
</reference>
<dbReference type="EC" id="4.1.1.50" evidence="1"/>
<dbReference type="EMBL" id="CP000924">
    <property type="protein sequence ID" value="ABY94825.1"/>
    <property type="molecule type" value="Genomic_DNA"/>
</dbReference>
<dbReference type="SMR" id="B0K9L2"/>
<dbReference type="STRING" id="340099.Teth39_1171"/>
<dbReference type="KEGG" id="tpd:Teth39_1171"/>
<dbReference type="eggNOG" id="COG1586">
    <property type="taxonomic scope" value="Bacteria"/>
</dbReference>
<dbReference type="HOGENOM" id="CLU_125470_2_3_9"/>
<dbReference type="UniPathway" id="UPA00331">
    <property type="reaction ID" value="UER00451"/>
</dbReference>
<dbReference type="Proteomes" id="UP000002156">
    <property type="component" value="Chromosome"/>
</dbReference>
<dbReference type="GO" id="GO:0005829">
    <property type="term" value="C:cytosol"/>
    <property type="evidence" value="ECO:0007669"/>
    <property type="project" value="TreeGrafter"/>
</dbReference>
<dbReference type="GO" id="GO:0004014">
    <property type="term" value="F:adenosylmethionine decarboxylase activity"/>
    <property type="evidence" value="ECO:0007669"/>
    <property type="project" value="UniProtKB-UniRule"/>
</dbReference>
<dbReference type="GO" id="GO:0008295">
    <property type="term" value="P:spermidine biosynthetic process"/>
    <property type="evidence" value="ECO:0007669"/>
    <property type="project" value="UniProtKB-UniRule"/>
</dbReference>
<dbReference type="FunFam" id="3.30.360.110:FF:000001">
    <property type="entry name" value="S-adenosylmethionine decarboxylase proenzyme"/>
    <property type="match status" value="1"/>
</dbReference>
<dbReference type="Gene3D" id="3.30.160.750">
    <property type="match status" value="1"/>
</dbReference>
<dbReference type="Gene3D" id="3.30.360.110">
    <property type="entry name" value="S-adenosylmethionine decarboxylase domain"/>
    <property type="match status" value="1"/>
</dbReference>
<dbReference type="HAMAP" id="MF_00464">
    <property type="entry name" value="AdoMetDC_1"/>
    <property type="match status" value="1"/>
</dbReference>
<dbReference type="InterPro" id="IPR042286">
    <property type="entry name" value="AdoMetDC_C"/>
</dbReference>
<dbReference type="InterPro" id="IPR003826">
    <property type="entry name" value="AdoMetDC_fam_prok"/>
</dbReference>
<dbReference type="InterPro" id="IPR042284">
    <property type="entry name" value="AdoMetDC_N"/>
</dbReference>
<dbReference type="InterPro" id="IPR016067">
    <property type="entry name" value="S-AdoMet_deCO2ase_core"/>
</dbReference>
<dbReference type="InterPro" id="IPR017716">
    <property type="entry name" value="S-AdoMet_deCOase_pro-enz"/>
</dbReference>
<dbReference type="NCBIfam" id="TIGR03330">
    <property type="entry name" value="SAM_DCase_Bsu"/>
    <property type="match status" value="1"/>
</dbReference>
<dbReference type="PANTHER" id="PTHR33866">
    <property type="entry name" value="S-ADENOSYLMETHIONINE DECARBOXYLASE PROENZYME"/>
    <property type="match status" value="1"/>
</dbReference>
<dbReference type="PANTHER" id="PTHR33866:SF2">
    <property type="entry name" value="S-ADENOSYLMETHIONINE DECARBOXYLASE PROENZYME"/>
    <property type="match status" value="1"/>
</dbReference>
<dbReference type="Pfam" id="PF02675">
    <property type="entry name" value="AdoMet_dc"/>
    <property type="match status" value="1"/>
</dbReference>
<dbReference type="SUPFAM" id="SSF56276">
    <property type="entry name" value="S-adenosylmethionine decarboxylase"/>
    <property type="match status" value="1"/>
</dbReference>
<comment type="function">
    <text evidence="1">Catalyzes the decarboxylation of S-adenosylmethionine to S-adenosylmethioninamine (dcAdoMet), the propylamine donor required for the synthesis of the polyamines spermine and spermidine from the diamine putrescine.</text>
</comment>
<comment type="catalytic activity">
    <reaction evidence="1">
        <text>S-adenosyl-L-methionine + H(+) = S-adenosyl 3-(methylsulfanyl)propylamine + CO2</text>
        <dbReference type="Rhea" id="RHEA:15981"/>
        <dbReference type="ChEBI" id="CHEBI:15378"/>
        <dbReference type="ChEBI" id="CHEBI:16526"/>
        <dbReference type="ChEBI" id="CHEBI:57443"/>
        <dbReference type="ChEBI" id="CHEBI:59789"/>
        <dbReference type="EC" id="4.1.1.50"/>
    </reaction>
</comment>
<comment type="cofactor">
    <cofactor evidence="1">
        <name>pyruvate</name>
        <dbReference type="ChEBI" id="CHEBI:15361"/>
    </cofactor>
    <text evidence="1">Binds 1 pyruvoyl group covalently per subunit.</text>
</comment>
<comment type="pathway">
    <text evidence="1">Amine and polyamine biosynthesis; S-adenosylmethioninamine biosynthesis; S-adenosylmethioninamine from S-adenosyl-L-methionine: step 1/1.</text>
</comment>
<comment type="subunit">
    <text evidence="1">Heterotetramer of two alpha and two beta chains arranged as a dimer of alpha/beta heterodimers.</text>
</comment>
<comment type="PTM">
    <text evidence="1">Is synthesized initially as an inactive proenzyme. Formation of the active enzyme involves a self-maturation process in which the active site pyruvoyl group is generated from an internal serine residue via an autocatalytic post-translational modification. Two non-identical subunits are generated from the proenzyme in this reaction, and the pyruvate is formed at the N-terminus of the alpha chain, which is derived from the carboxyl end of the proenzyme. The post-translation cleavage follows an unusual pathway, termed non-hydrolytic serinolysis, in which the side chain hydroxyl group of the serine supplies its oxygen atom to form the C-terminus of the beta chain, while the remainder of the serine residue undergoes an oxidative deamination to produce ammonia and the pyruvoyl group blocking the N-terminus of the alpha chain.</text>
</comment>
<comment type="similarity">
    <text evidence="1">Belongs to the prokaryotic AdoMetDC family. Type 1 subfamily.</text>
</comment>
<organism>
    <name type="scientific">Thermoanaerobacter pseudethanolicus (strain ATCC 33223 / 39E)</name>
    <name type="common">Clostridium thermohydrosulfuricum</name>
    <dbReference type="NCBI Taxonomy" id="340099"/>
    <lineage>
        <taxon>Bacteria</taxon>
        <taxon>Bacillati</taxon>
        <taxon>Bacillota</taxon>
        <taxon>Clostridia</taxon>
        <taxon>Thermoanaerobacterales</taxon>
        <taxon>Thermoanaerobacteraceae</taxon>
        <taxon>Thermoanaerobacter</taxon>
    </lineage>
</organism>
<keyword id="KW-0068">Autocatalytic cleavage</keyword>
<keyword id="KW-0210">Decarboxylase</keyword>
<keyword id="KW-0456">Lyase</keyword>
<keyword id="KW-0620">Polyamine biosynthesis</keyword>
<keyword id="KW-0670">Pyruvate</keyword>
<keyword id="KW-1185">Reference proteome</keyword>
<keyword id="KW-0949">S-adenosyl-L-methionine</keyword>
<keyword id="KW-0704">Schiff base</keyword>
<keyword id="KW-0745">Spermidine biosynthesis</keyword>
<keyword id="KW-0865">Zymogen</keyword>
<gene>
    <name evidence="1" type="primary">speH</name>
    <name type="ordered locus">Teth39_1171</name>
</gene>
<evidence type="ECO:0000255" key="1">
    <source>
        <dbReference type="HAMAP-Rule" id="MF_00464"/>
    </source>
</evidence>
<protein>
    <recommendedName>
        <fullName evidence="1">S-adenosylmethionine decarboxylase proenzyme</fullName>
        <shortName evidence="1">AdoMetDC</shortName>
        <shortName evidence="1">SAMDC</shortName>
        <ecNumber evidence="1">4.1.1.50</ecNumber>
    </recommendedName>
    <component>
        <recommendedName>
            <fullName evidence="1">S-adenosylmethionine decarboxylase beta chain</fullName>
        </recommendedName>
    </component>
    <component>
        <recommendedName>
            <fullName evidence="1">S-adenosylmethionine decarboxylase alpha chain</fullName>
        </recommendedName>
    </component>
</protein>
<proteinExistence type="inferred from homology"/>
<accession>B0K9L2</accession>
<sequence>MNALGRHILAEIYGCDSNILDNLELIEDIMVQSAIVTGAEIREVAFHKFNPQGVSGVVVISESHITIHTWPELGYAAVDVFTCGDDVNPWDACNYIAKMLRAQNMTATEVKRGVFEKPVKVVNY</sequence>